<protein>
    <recommendedName>
        <fullName evidence="1">2,3-bisphosphoglycerate-dependent phosphoglycerate mutase</fullName>
        <shortName evidence="1">BPG-dependent PGAM</shortName>
        <shortName evidence="1">PGAM</shortName>
        <shortName evidence="1">Phosphoglyceromutase</shortName>
        <shortName evidence="1">dPGM</shortName>
        <ecNumber evidence="1">5.4.2.11</ecNumber>
    </recommendedName>
</protein>
<proteinExistence type="inferred from homology"/>
<feature type="chain" id="PRO_1000064078" description="2,3-bisphosphoglycerate-dependent phosphoglycerate mutase">
    <location>
        <begin position="1"/>
        <end position="249"/>
    </location>
</feature>
<feature type="active site" description="Tele-phosphohistidine intermediate" evidence="1">
    <location>
        <position position="12"/>
    </location>
</feature>
<feature type="active site" description="Proton donor/acceptor" evidence="1">
    <location>
        <position position="90"/>
    </location>
</feature>
<feature type="binding site" evidence="1">
    <location>
        <begin position="11"/>
        <end position="18"/>
    </location>
    <ligand>
        <name>substrate</name>
    </ligand>
</feature>
<feature type="binding site" evidence="1">
    <location>
        <begin position="24"/>
        <end position="25"/>
    </location>
    <ligand>
        <name>substrate</name>
    </ligand>
</feature>
<feature type="binding site" evidence="1">
    <location>
        <position position="63"/>
    </location>
    <ligand>
        <name>substrate</name>
    </ligand>
</feature>
<feature type="binding site" evidence="1">
    <location>
        <begin position="90"/>
        <end position="93"/>
    </location>
    <ligand>
        <name>substrate</name>
    </ligand>
</feature>
<feature type="binding site" evidence="1">
    <location>
        <position position="101"/>
    </location>
    <ligand>
        <name>substrate</name>
    </ligand>
</feature>
<feature type="binding site" evidence="1">
    <location>
        <begin position="117"/>
        <end position="118"/>
    </location>
    <ligand>
        <name>substrate</name>
    </ligand>
</feature>
<feature type="binding site" evidence="1">
    <location>
        <begin position="184"/>
        <end position="185"/>
    </location>
    <ligand>
        <name>substrate</name>
    </ligand>
</feature>
<feature type="site" description="Transition state stabilizer" evidence="1">
    <location>
        <position position="183"/>
    </location>
</feature>
<comment type="function">
    <text evidence="1">Catalyzes the interconversion of 2-phosphoglycerate and 3-phosphoglycerate.</text>
</comment>
<comment type="catalytic activity">
    <reaction evidence="1">
        <text>(2R)-2-phosphoglycerate = (2R)-3-phosphoglycerate</text>
        <dbReference type="Rhea" id="RHEA:15901"/>
        <dbReference type="ChEBI" id="CHEBI:58272"/>
        <dbReference type="ChEBI" id="CHEBI:58289"/>
        <dbReference type="EC" id="5.4.2.11"/>
    </reaction>
</comment>
<comment type="pathway">
    <text evidence="1">Carbohydrate degradation; glycolysis; pyruvate from D-glyceraldehyde 3-phosphate: step 3/5.</text>
</comment>
<comment type="similarity">
    <text evidence="1">Belongs to the phosphoglycerate mutase family. BPG-dependent PGAM subfamily.</text>
</comment>
<sequence length="249" mass="27216">MANTGSLVLLRHGESDWNALNLFTGWVDVGLTDKGQAEAVRSGELIAEHDLLPDVLYTSLLRRAITTAHLALDSADRLWIPVRRSWRLNERHYGALQGLDKAETKARYGEEQFMAWRRSYDTPPPPIERGSQFSQDADPRYADIGGGPLTECLADVVARFLPYFTDVIVGDLRVGKTVLIVAHGNSLRALVKHLDQMSDDEIVGLNIPTGIPLRYDLDSAMRPLVRGGTYLDPEAAAAGAAAVAGQGRG</sequence>
<reference key="1">
    <citation type="journal article" date="2007" name="Proc. Natl. Acad. Sci. U.S.A.">
        <title>Genome plasticity of BCG and impact on vaccine efficacy.</title>
        <authorList>
            <person name="Brosch R."/>
            <person name="Gordon S.V."/>
            <person name="Garnier T."/>
            <person name="Eiglmeier K."/>
            <person name="Frigui W."/>
            <person name="Valenti P."/>
            <person name="Dos Santos S."/>
            <person name="Duthoy S."/>
            <person name="Lacroix C."/>
            <person name="Garcia-Pelayo C."/>
            <person name="Inwald J.K."/>
            <person name="Golby P."/>
            <person name="Garcia J.N."/>
            <person name="Hewinson R.G."/>
            <person name="Behr M.A."/>
            <person name="Quail M.A."/>
            <person name="Churcher C."/>
            <person name="Barrell B.G."/>
            <person name="Parkhill J."/>
            <person name="Cole S.T."/>
        </authorList>
    </citation>
    <scope>NUCLEOTIDE SEQUENCE [LARGE SCALE GENOMIC DNA]</scope>
    <source>
        <strain>BCG / Pasteur 1173P2</strain>
    </source>
</reference>
<dbReference type="EC" id="5.4.2.11" evidence="1"/>
<dbReference type="EMBL" id="AM408590">
    <property type="protein sequence ID" value="CAL70515.1"/>
    <property type="molecule type" value="Genomic_DNA"/>
</dbReference>
<dbReference type="RefSeq" id="WP_003402379.1">
    <property type="nucleotide sequence ID" value="NC_008769.1"/>
</dbReference>
<dbReference type="SMR" id="A1KFW3"/>
<dbReference type="KEGG" id="mbb:BCG_0530"/>
<dbReference type="HOGENOM" id="CLU_033323_1_1_11"/>
<dbReference type="UniPathway" id="UPA00109">
    <property type="reaction ID" value="UER00186"/>
</dbReference>
<dbReference type="Proteomes" id="UP000001472">
    <property type="component" value="Chromosome"/>
</dbReference>
<dbReference type="GO" id="GO:0004619">
    <property type="term" value="F:phosphoglycerate mutase activity"/>
    <property type="evidence" value="ECO:0007669"/>
    <property type="project" value="UniProtKB-EC"/>
</dbReference>
<dbReference type="GO" id="GO:0006094">
    <property type="term" value="P:gluconeogenesis"/>
    <property type="evidence" value="ECO:0007669"/>
    <property type="project" value="UniProtKB-UniRule"/>
</dbReference>
<dbReference type="GO" id="GO:0006096">
    <property type="term" value="P:glycolytic process"/>
    <property type="evidence" value="ECO:0007669"/>
    <property type="project" value="UniProtKB-UniRule"/>
</dbReference>
<dbReference type="CDD" id="cd07067">
    <property type="entry name" value="HP_PGM_like"/>
    <property type="match status" value="1"/>
</dbReference>
<dbReference type="FunFam" id="3.40.50.1240:FF:000012">
    <property type="entry name" value="Phosphoglycerate mutase 1"/>
    <property type="match status" value="1"/>
</dbReference>
<dbReference type="Gene3D" id="3.40.50.1240">
    <property type="entry name" value="Phosphoglycerate mutase-like"/>
    <property type="match status" value="1"/>
</dbReference>
<dbReference type="HAMAP" id="MF_01039">
    <property type="entry name" value="PGAM_GpmA"/>
    <property type="match status" value="1"/>
</dbReference>
<dbReference type="InterPro" id="IPR013078">
    <property type="entry name" value="His_Pase_superF_clade-1"/>
</dbReference>
<dbReference type="InterPro" id="IPR029033">
    <property type="entry name" value="His_PPase_superfam"/>
</dbReference>
<dbReference type="InterPro" id="IPR001345">
    <property type="entry name" value="PG/BPGM_mutase_AS"/>
</dbReference>
<dbReference type="InterPro" id="IPR005952">
    <property type="entry name" value="Phosphogly_mut1"/>
</dbReference>
<dbReference type="NCBIfam" id="TIGR01258">
    <property type="entry name" value="pgm_1"/>
    <property type="match status" value="1"/>
</dbReference>
<dbReference type="NCBIfam" id="NF010713">
    <property type="entry name" value="PRK14115.1"/>
    <property type="match status" value="1"/>
</dbReference>
<dbReference type="NCBIfam" id="NF010718">
    <property type="entry name" value="PRK14120.1"/>
    <property type="match status" value="1"/>
</dbReference>
<dbReference type="PANTHER" id="PTHR11931">
    <property type="entry name" value="PHOSPHOGLYCERATE MUTASE"/>
    <property type="match status" value="1"/>
</dbReference>
<dbReference type="Pfam" id="PF00300">
    <property type="entry name" value="His_Phos_1"/>
    <property type="match status" value="1"/>
</dbReference>
<dbReference type="PIRSF" id="PIRSF000709">
    <property type="entry name" value="6PFK_2-Ptase"/>
    <property type="match status" value="1"/>
</dbReference>
<dbReference type="SMART" id="SM00855">
    <property type="entry name" value="PGAM"/>
    <property type="match status" value="1"/>
</dbReference>
<dbReference type="SUPFAM" id="SSF53254">
    <property type="entry name" value="Phosphoglycerate mutase-like"/>
    <property type="match status" value="1"/>
</dbReference>
<dbReference type="PROSITE" id="PS00175">
    <property type="entry name" value="PG_MUTASE"/>
    <property type="match status" value="1"/>
</dbReference>
<keyword id="KW-0312">Gluconeogenesis</keyword>
<keyword id="KW-0324">Glycolysis</keyword>
<keyword id="KW-0413">Isomerase</keyword>
<name>GPMA_MYCBP</name>
<evidence type="ECO:0000255" key="1">
    <source>
        <dbReference type="HAMAP-Rule" id="MF_01039"/>
    </source>
</evidence>
<organism>
    <name type="scientific">Mycobacterium bovis (strain BCG / Pasteur 1173P2)</name>
    <dbReference type="NCBI Taxonomy" id="410289"/>
    <lineage>
        <taxon>Bacteria</taxon>
        <taxon>Bacillati</taxon>
        <taxon>Actinomycetota</taxon>
        <taxon>Actinomycetes</taxon>
        <taxon>Mycobacteriales</taxon>
        <taxon>Mycobacteriaceae</taxon>
        <taxon>Mycobacterium</taxon>
        <taxon>Mycobacterium tuberculosis complex</taxon>
    </lineage>
</organism>
<accession>A1KFW3</accession>
<gene>
    <name evidence="1" type="primary">gpmA</name>
    <name type="ordered locus">BCG_0530</name>
</gene>